<protein>
    <recommendedName>
        <fullName evidence="1">UPF0316 protein LA_0606</fullName>
    </recommendedName>
</protein>
<evidence type="ECO:0000255" key="1">
    <source>
        <dbReference type="HAMAP-Rule" id="MF_01515"/>
    </source>
</evidence>
<organism>
    <name type="scientific">Leptospira interrogans serogroup Icterohaemorrhagiae serovar Lai (strain 56601)</name>
    <dbReference type="NCBI Taxonomy" id="189518"/>
    <lineage>
        <taxon>Bacteria</taxon>
        <taxon>Pseudomonadati</taxon>
        <taxon>Spirochaetota</taxon>
        <taxon>Spirochaetia</taxon>
        <taxon>Leptospirales</taxon>
        <taxon>Leptospiraceae</taxon>
        <taxon>Leptospira</taxon>
    </lineage>
</organism>
<proteinExistence type="inferred from homology"/>
<comment type="subcellular location">
    <subcellularLocation>
        <location evidence="1">Cell membrane</location>
        <topology evidence="1">Multi-pass membrane protein</topology>
    </subcellularLocation>
</comment>
<comment type="similarity">
    <text evidence="1">Belongs to the UPF0316 family.</text>
</comment>
<keyword id="KW-1003">Cell membrane</keyword>
<keyword id="KW-0472">Membrane</keyword>
<keyword id="KW-1185">Reference proteome</keyword>
<keyword id="KW-0812">Transmembrane</keyword>
<keyword id="KW-1133">Transmembrane helix</keyword>
<gene>
    <name type="ordered locus">LA_0606</name>
</gene>
<sequence length="199" mass="22228">MEFSFPLPGNPIFDYVLLPCFIFLSRVTDVSIGTIRVILLTREKKGIAASLGFLEVLLWVVVITQVIKNLNNVFCYLAYAGGFATGTFIGMILEEKLAIGFSLLRIISPQNGSEIADKLSEAGYRVTIMNGHGSRGPVKIVFTVLKRKKIDQAMKIVQNVEPDVFYSIENARRTNTTTFEDSPGLLRRGILEKILKIRK</sequence>
<name>Y606_LEPIN</name>
<feature type="chain" id="PRO_0000171945" description="UPF0316 protein LA_0606">
    <location>
        <begin position="1"/>
        <end position="199"/>
    </location>
</feature>
<feature type="transmembrane region" description="Helical" evidence="1">
    <location>
        <begin position="47"/>
        <end position="67"/>
    </location>
</feature>
<feature type="transmembrane region" description="Helical" evidence="1">
    <location>
        <begin position="73"/>
        <end position="93"/>
    </location>
</feature>
<dbReference type="EMBL" id="AE010300">
    <property type="protein sequence ID" value="AAN47805.2"/>
    <property type="molecule type" value="Genomic_DNA"/>
</dbReference>
<dbReference type="RefSeq" id="NP_710787.2">
    <property type="nucleotide sequence ID" value="NC_004342.2"/>
</dbReference>
<dbReference type="RefSeq" id="WP_000395815.1">
    <property type="nucleotide sequence ID" value="NC_004342.2"/>
</dbReference>
<dbReference type="SMR" id="Q8F8F1"/>
<dbReference type="PaxDb" id="189518-LA_0606"/>
<dbReference type="EnsemblBacteria" id="AAN47805">
    <property type="protein sequence ID" value="AAN47805"/>
    <property type="gene ID" value="LA_0606"/>
</dbReference>
<dbReference type="KEGG" id="lil:LA_0606"/>
<dbReference type="PATRIC" id="fig|189518.3.peg.607"/>
<dbReference type="HOGENOM" id="CLU_106166_0_0_12"/>
<dbReference type="InParanoid" id="Q8F8F1"/>
<dbReference type="OrthoDB" id="48231at2"/>
<dbReference type="Proteomes" id="UP000001408">
    <property type="component" value="Chromosome I"/>
</dbReference>
<dbReference type="GO" id="GO:0005886">
    <property type="term" value="C:plasma membrane"/>
    <property type="evidence" value="ECO:0007669"/>
    <property type="project" value="UniProtKB-SubCell"/>
</dbReference>
<dbReference type="CDD" id="cd16381">
    <property type="entry name" value="YitT_C_like_1"/>
    <property type="match status" value="1"/>
</dbReference>
<dbReference type="Gene3D" id="3.30.70.120">
    <property type="match status" value="1"/>
</dbReference>
<dbReference type="HAMAP" id="MF_01515">
    <property type="entry name" value="UPF0316"/>
    <property type="match status" value="1"/>
</dbReference>
<dbReference type="InterPro" id="IPR019264">
    <property type="entry name" value="DUF2179"/>
</dbReference>
<dbReference type="InterPro" id="IPR044035">
    <property type="entry name" value="DUF5698"/>
</dbReference>
<dbReference type="InterPro" id="IPR015867">
    <property type="entry name" value="N-reg_PII/ATP_PRibTrfase_C"/>
</dbReference>
<dbReference type="InterPro" id="IPR022930">
    <property type="entry name" value="UPF0316"/>
</dbReference>
<dbReference type="NCBIfam" id="NF003191">
    <property type="entry name" value="PRK04164.1-2"/>
    <property type="match status" value="1"/>
</dbReference>
<dbReference type="PANTHER" id="PTHR40060">
    <property type="entry name" value="UPF0316 PROTEIN YEBE"/>
    <property type="match status" value="1"/>
</dbReference>
<dbReference type="PANTHER" id="PTHR40060:SF1">
    <property type="entry name" value="UPF0316 PROTEIN YEBE"/>
    <property type="match status" value="1"/>
</dbReference>
<dbReference type="Pfam" id="PF10035">
    <property type="entry name" value="DUF2179"/>
    <property type="match status" value="1"/>
</dbReference>
<dbReference type="Pfam" id="PF18955">
    <property type="entry name" value="DUF5698"/>
    <property type="match status" value="1"/>
</dbReference>
<reference key="1">
    <citation type="journal article" date="2003" name="Nature">
        <title>Unique physiological and pathogenic features of Leptospira interrogans revealed by whole-genome sequencing.</title>
        <authorList>
            <person name="Ren S.-X."/>
            <person name="Fu G."/>
            <person name="Jiang X.-G."/>
            <person name="Zeng R."/>
            <person name="Miao Y.-G."/>
            <person name="Xu H."/>
            <person name="Zhang Y.-X."/>
            <person name="Xiong H."/>
            <person name="Lu G."/>
            <person name="Lu L.-F."/>
            <person name="Jiang H.-Q."/>
            <person name="Jia J."/>
            <person name="Tu Y.-F."/>
            <person name="Jiang J.-X."/>
            <person name="Gu W.-Y."/>
            <person name="Zhang Y.-Q."/>
            <person name="Cai Z."/>
            <person name="Sheng H.-H."/>
            <person name="Yin H.-F."/>
            <person name="Zhang Y."/>
            <person name="Zhu G.-F."/>
            <person name="Wan M."/>
            <person name="Huang H.-L."/>
            <person name="Qian Z."/>
            <person name="Wang S.-Y."/>
            <person name="Ma W."/>
            <person name="Yao Z.-J."/>
            <person name="Shen Y."/>
            <person name="Qiang B.-Q."/>
            <person name="Xia Q.-C."/>
            <person name="Guo X.-K."/>
            <person name="Danchin A."/>
            <person name="Saint Girons I."/>
            <person name="Somerville R.L."/>
            <person name="Wen Y.-M."/>
            <person name="Shi M.-H."/>
            <person name="Chen Z."/>
            <person name="Xu J.-G."/>
            <person name="Zhao G.-P."/>
        </authorList>
    </citation>
    <scope>NUCLEOTIDE SEQUENCE [LARGE SCALE GENOMIC DNA]</scope>
    <source>
        <strain>56601</strain>
    </source>
</reference>
<accession>Q8F8F1</accession>